<sequence>MSRQFTYKSGAAAKGAFSGCSVVLSGSSSPSYRAGSKGLSGGFGSRSLYSLGCARSVSFNMASGSGRAGGYGFSRGRASGFAGSMFGSVALGPMCPSLCPPGGIHQVIVNKSLLAPLNVELDPEIQKVCAQEREQIKALNNKFASFIDKVRFLEQQNQVLGTKWELLQQQDLDNCKNNLEPILEGYISNLRKQLEMLSGDRVRLDSELRSMRDVVEDYKKRYEEEINKRTTAENEFVVLKKDVDAAYMSKVELQAKVDALEREIKFFTCLYEGEIAQMQSHISDTSVILSMDNNRNLDLNSIIAEVRAQYEDIALKSKAEAEALYQTKFQELQLAAGRHGDDLKHTKNEIAELTRLIQRLRSETESVKKQCSNLETAITDAEQRGHCALKDAQAKLDELEAALLQAKEELARMMCEYQELMSTKLALDIEIATYRKLLEGEECRMSGEYTNSVSISVISSSMAGTAGTGAGFGYSGSGTYGYRPSSVGGGYGFLLGGCVTGSGNCSPRGEAKTRLGSTSEIKDLLGKTPALSSPTKKTPR</sequence>
<protein>
    <recommendedName>
        <fullName>Keratin, type II cytoskeletal 73</fullName>
    </recommendedName>
    <alternativeName>
        <fullName>Cytokeratin-73</fullName>
        <shortName>CK-73</shortName>
    </alternativeName>
    <alternativeName>
        <fullName>Keratin-73</fullName>
        <shortName>K73</shortName>
    </alternativeName>
    <alternativeName>
        <fullName>Type II inner root sheath-specific keratin-K6irs3</fullName>
    </alternativeName>
    <alternativeName>
        <fullName>Type-II keratin Kb36</fullName>
    </alternativeName>
</protein>
<evidence type="ECO:0000250" key="1"/>
<evidence type="ECO:0000255" key="2">
    <source>
        <dbReference type="PROSITE-ProRule" id="PRU01188"/>
    </source>
</evidence>
<evidence type="ECO:0000256" key="3">
    <source>
        <dbReference type="SAM" id="MobiDB-lite"/>
    </source>
</evidence>
<proteinExistence type="evidence at transcript level"/>
<name>K2C73_BOVIN</name>
<feature type="chain" id="PRO_0000314880" description="Keratin, type II cytoskeletal 73">
    <location>
        <begin position="1"/>
        <end position="540"/>
    </location>
</feature>
<feature type="domain" description="IF rod" evidence="2">
    <location>
        <begin position="132"/>
        <end position="445"/>
    </location>
</feature>
<feature type="region of interest" description="Head">
    <location>
        <begin position="1"/>
        <end position="131"/>
    </location>
</feature>
<feature type="region of interest" description="Coil 1A">
    <location>
        <begin position="132"/>
        <end position="167"/>
    </location>
</feature>
<feature type="region of interest" description="Linker 1">
    <location>
        <begin position="168"/>
        <end position="186"/>
    </location>
</feature>
<feature type="region of interest" description="Coil 1B">
    <location>
        <begin position="187"/>
        <end position="278"/>
    </location>
</feature>
<feature type="region of interest" description="Linker 12">
    <location>
        <begin position="279"/>
        <end position="302"/>
    </location>
</feature>
<feature type="region of interest" description="Coil 2">
    <location>
        <begin position="303"/>
        <end position="441"/>
    </location>
</feature>
<feature type="region of interest" description="Tail">
    <location>
        <begin position="442"/>
        <end position="540"/>
    </location>
</feature>
<feature type="region of interest" description="Disordered" evidence="3">
    <location>
        <begin position="509"/>
        <end position="540"/>
    </location>
</feature>
<feature type="compositionally biased region" description="Polar residues" evidence="3">
    <location>
        <begin position="530"/>
        <end position="540"/>
    </location>
</feature>
<feature type="site" description="Stutter">
    <location>
        <position position="383"/>
    </location>
</feature>
<reference key="1">
    <citation type="submission" date="2007-03" db="EMBL/GenBank/DDBJ databases">
        <authorList>
            <consortium name="NIH - Mammalian Gene Collection (MGC) project"/>
        </authorList>
    </citation>
    <scope>NUCLEOTIDE SEQUENCE [LARGE SCALE MRNA]</scope>
    <source>
        <strain>Hereford</strain>
        <tissue>Fetal skin</tissue>
    </source>
</reference>
<keyword id="KW-0175">Coiled coil</keyword>
<keyword id="KW-0403">Intermediate filament</keyword>
<keyword id="KW-0416">Keratin</keyword>
<keyword id="KW-1185">Reference proteome</keyword>
<dbReference type="EMBL" id="BC134633">
    <property type="protein sequence ID" value="AAI34634.1"/>
    <property type="molecule type" value="mRNA"/>
</dbReference>
<dbReference type="RefSeq" id="NP_001104574.1">
    <property type="nucleotide sequence ID" value="NM_001111104.1"/>
</dbReference>
<dbReference type="RefSeq" id="XP_010803212.1">
    <property type="nucleotide sequence ID" value="XM_010804910.3"/>
</dbReference>
<dbReference type="SMR" id="A7YWK3"/>
<dbReference type="FunCoup" id="A7YWK3">
    <property type="interactions" value="25"/>
</dbReference>
<dbReference type="STRING" id="9913.ENSBTAP00000010393"/>
<dbReference type="PaxDb" id="9913-ENSBTAP00000010393"/>
<dbReference type="PeptideAtlas" id="A7YWK3"/>
<dbReference type="Ensembl" id="ENSBTAT00000010393.5">
    <property type="protein sequence ID" value="ENSBTAP00000010393.4"/>
    <property type="gene ID" value="ENSBTAG00000037638.2"/>
</dbReference>
<dbReference type="GeneID" id="531981"/>
<dbReference type="KEGG" id="bta:531981"/>
<dbReference type="CTD" id="319101"/>
<dbReference type="VEuPathDB" id="HostDB:ENSBTAG00000037638"/>
<dbReference type="VGNC" id="VGNC:30737">
    <property type="gene designation" value="KRT73"/>
</dbReference>
<dbReference type="eggNOG" id="ENOG502SK67">
    <property type="taxonomic scope" value="Eukaryota"/>
</dbReference>
<dbReference type="GeneTree" id="ENSGT00940000161853"/>
<dbReference type="HOGENOM" id="CLU_012560_6_1_1"/>
<dbReference type="InParanoid" id="A7YWK3"/>
<dbReference type="OMA" id="ARMMCEY"/>
<dbReference type="OrthoDB" id="2441647at2759"/>
<dbReference type="TreeFam" id="TF317854"/>
<dbReference type="Reactome" id="R-BTA-6805567">
    <property type="pathway name" value="Keratinization"/>
</dbReference>
<dbReference type="Reactome" id="R-BTA-6809371">
    <property type="pathway name" value="Formation of the cornified envelope"/>
</dbReference>
<dbReference type="Proteomes" id="UP000009136">
    <property type="component" value="Chromosome 5"/>
</dbReference>
<dbReference type="Bgee" id="ENSBTAG00000037638">
    <property type="expression patterns" value="Expressed in zone of skin and 9 other cell types or tissues"/>
</dbReference>
<dbReference type="GO" id="GO:0045095">
    <property type="term" value="C:keratin filament"/>
    <property type="evidence" value="ECO:0000318"/>
    <property type="project" value="GO_Central"/>
</dbReference>
<dbReference type="GO" id="GO:0030280">
    <property type="term" value="F:structural constituent of skin epidermis"/>
    <property type="evidence" value="ECO:0000318"/>
    <property type="project" value="GO_Central"/>
</dbReference>
<dbReference type="GO" id="GO:0045109">
    <property type="term" value="P:intermediate filament organization"/>
    <property type="evidence" value="ECO:0000318"/>
    <property type="project" value="GO_Central"/>
</dbReference>
<dbReference type="GO" id="GO:0031424">
    <property type="term" value="P:keratinization"/>
    <property type="evidence" value="ECO:0000318"/>
    <property type="project" value="GO_Central"/>
</dbReference>
<dbReference type="FunFam" id="1.20.5.1160:FF:000001">
    <property type="entry name" value="Keratin type II"/>
    <property type="match status" value="1"/>
</dbReference>
<dbReference type="FunFam" id="1.20.5.170:FF:000004">
    <property type="entry name" value="Keratin, type II cytoskeletal 5"/>
    <property type="match status" value="1"/>
</dbReference>
<dbReference type="FunFam" id="1.20.5.500:FF:000001">
    <property type="entry name" value="Type II keratin 23"/>
    <property type="match status" value="1"/>
</dbReference>
<dbReference type="Gene3D" id="1.20.5.170">
    <property type="match status" value="1"/>
</dbReference>
<dbReference type="Gene3D" id="1.20.5.500">
    <property type="entry name" value="Single helix bin"/>
    <property type="match status" value="1"/>
</dbReference>
<dbReference type="Gene3D" id="1.20.5.1160">
    <property type="entry name" value="Vasodilator-stimulated phosphoprotein"/>
    <property type="match status" value="1"/>
</dbReference>
<dbReference type="InterPro" id="IPR018039">
    <property type="entry name" value="IF_conserved"/>
</dbReference>
<dbReference type="InterPro" id="IPR039008">
    <property type="entry name" value="IF_rod_dom"/>
</dbReference>
<dbReference type="InterPro" id="IPR032444">
    <property type="entry name" value="Keratin_2_head"/>
</dbReference>
<dbReference type="InterPro" id="IPR003054">
    <property type="entry name" value="Keratin_II"/>
</dbReference>
<dbReference type="PANTHER" id="PTHR45616">
    <property type="entry name" value="GATA-TYPE DOMAIN-CONTAINING PROTEIN"/>
    <property type="match status" value="1"/>
</dbReference>
<dbReference type="PANTHER" id="PTHR45616:SF31">
    <property type="entry name" value="KERATIN, TYPE II CYTOSKELETAL 73"/>
    <property type="match status" value="1"/>
</dbReference>
<dbReference type="Pfam" id="PF00038">
    <property type="entry name" value="Filament"/>
    <property type="match status" value="1"/>
</dbReference>
<dbReference type="Pfam" id="PF16208">
    <property type="entry name" value="Keratin_2_head"/>
    <property type="match status" value="1"/>
</dbReference>
<dbReference type="PRINTS" id="PR01276">
    <property type="entry name" value="TYPE2KERATIN"/>
</dbReference>
<dbReference type="SMART" id="SM01391">
    <property type="entry name" value="Filament"/>
    <property type="match status" value="1"/>
</dbReference>
<dbReference type="SUPFAM" id="SSF64593">
    <property type="entry name" value="Intermediate filament protein, coiled coil region"/>
    <property type="match status" value="3"/>
</dbReference>
<dbReference type="PROSITE" id="PS00226">
    <property type="entry name" value="IF_ROD_1"/>
    <property type="match status" value="1"/>
</dbReference>
<dbReference type="PROSITE" id="PS51842">
    <property type="entry name" value="IF_ROD_2"/>
    <property type="match status" value="1"/>
</dbReference>
<accession>A7YWK3</accession>
<organism>
    <name type="scientific">Bos taurus</name>
    <name type="common">Bovine</name>
    <dbReference type="NCBI Taxonomy" id="9913"/>
    <lineage>
        <taxon>Eukaryota</taxon>
        <taxon>Metazoa</taxon>
        <taxon>Chordata</taxon>
        <taxon>Craniata</taxon>
        <taxon>Vertebrata</taxon>
        <taxon>Euteleostomi</taxon>
        <taxon>Mammalia</taxon>
        <taxon>Eutheria</taxon>
        <taxon>Laurasiatheria</taxon>
        <taxon>Artiodactyla</taxon>
        <taxon>Ruminantia</taxon>
        <taxon>Pecora</taxon>
        <taxon>Bovidae</taxon>
        <taxon>Bovinae</taxon>
        <taxon>Bos</taxon>
    </lineage>
</organism>
<gene>
    <name type="primary">KRT73</name>
</gene>
<comment type="function">
    <text evidence="1">Has a role in hair formation. Specific component of keratin intermediate filaments in the inner root sheath (IRS) of the hair follicle (By similarity).</text>
</comment>
<comment type="subunit">
    <text>Heterotetramer of two type I and two type II keratins.</text>
</comment>
<comment type="miscellaneous">
    <text>There are two types of cytoskeletal and microfibrillar keratin, I (acidic) and II (neutral to basic) (40-55 and 56-70 kDa, respectively).</text>
</comment>
<comment type="similarity">
    <text evidence="2">Belongs to the intermediate filament family.</text>
</comment>